<protein>
    <recommendedName>
        <fullName evidence="5">ESAT-6-like protein EsxK</fullName>
    </recommendedName>
</protein>
<proteinExistence type="evidence at protein level"/>
<feature type="chain" id="PRO_0000167803" description="ESAT-6-like protein EsxK">
    <location>
        <begin position="1"/>
        <end position="98"/>
    </location>
</feature>
<accession>P9WNJ7</accession>
<accession>L0T8X9</accession>
<accession>O05299</accession>
<keyword id="KW-1185">Reference proteome</keyword>
<keyword id="KW-0964">Secreted</keyword>
<reference key="1">
    <citation type="journal article" date="1998" name="Nature">
        <title>Deciphering the biology of Mycobacterium tuberculosis from the complete genome sequence.</title>
        <authorList>
            <person name="Cole S.T."/>
            <person name="Brosch R."/>
            <person name="Parkhill J."/>
            <person name="Garnier T."/>
            <person name="Churcher C.M."/>
            <person name="Harris D.E."/>
            <person name="Gordon S.V."/>
            <person name="Eiglmeier K."/>
            <person name="Gas S."/>
            <person name="Barry C.E. III"/>
            <person name="Tekaia F."/>
            <person name="Badcock K."/>
            <person name="Basham D."/>
            <person name="Brown D."/>
            <person name="Chillingworth T."/>
            <person name="Connor R."/>
            <person name="Davies R.M."/>
            <person name="Devlin K."/>
            <person name="Feltwell T."/>
            <person name="Gentles S."/>
            <person name="Hamlin N."/>
            <person name="Holroyd S."/>
            <person name="Hornsby T."/>
            <person name="Jagels K."/>
            <person name="Krogh A."/>
            <person name="McLean J."/>
            <person name="Moule S."/>
            <person name="Murphy L.D."/>
            <person name="Oliver S."/>
            <person name="Osborne J."/>
            <person name="Quail M.A."/>
            <person name="Rajandream M.A."/>
            <person name="Rogers J."/>
            <person name="Rutter S."/>
            <person name="Seeger K."/>
            <person name="Skelton S."/>
            <person name="Squares S."/>
            <person name="Squares R."/>
            <person name="Sulston J.E."/>
            <person name="Taylor K."/>
            <person name="Whitehead S."/>
            <person name="Barrell B.G."/>
        </authorList>
    </citation>
    <scope>NUCLEOTIDE SEQUENCE [LARGE SCALE GENOMIC DNA]</scope>
    <source>
        <strain>ATCC 25618 / H37Rv</strain>
    </source>
</reference>
<reference key="2">
    <citation type="journal article" date="2003" name="Microbes Infect.">
        <title>Comparative proteome analysis of culture supernatant proteins of Mycobacterium tuberculosis H37Rv and H37Ra.</title>
        <authorList>
            <person name="He X.Y."/>
            <person name="Zhuang Y.H."/>
            <person name="Zhang X.G."/>
            <person name="Li G.L."/>
        </authorList>
    </citation>
    <scope>IDENTIFICATION BY MASS SPECTROMETRY</scope>
    <scope>SUBCELLULAR LOCATION</scope>
    <source>
        <strain>ATCC 27294 / TMC 102 / H37Rv</strain>
    </source>
</reference>
<reference key="3">
    <citation type="journal article" date="2009" name="PLoS Pathog.">
        <title>Systematic genetic nomenclature for type VII secretion systems.</title>
        <authorList>
            <person name="Bitter W."/>
            <person name="Houben E.N."/>
            <person name="Bottai D."/>
            <person name="Brodin P."/>
            <person name="Brown E.J."/>
            <person name="Cox J.S."/>
            <person name="Derbyshire K."/>
            <person name="Fortune S.M."/>
            <person name="Gao L.Y."/>
            <person name="Liu J."/>
            <person name="Gey van Pittius N.C."/>
            <person name="Pym A.S."/>
            <person name="Rubin E.J."/>
            <person name="Sherman D.R."/>
            <person name="Cole S.T."/>
            <person name="Brosch R."/>
        </authorList>
    </citation>
    <scope>NOMENCLATURE</scope>
</reference>
<reference key="4">
    <citation type="journal article" date="2011" name="Front. Microbiol.">
        <title>Mycobacterium tuberculosis RNA expression patterns in sputum bacteria indicate secreted Esx factors contributing to growth are highly expressed in active disease.</title>
        <authorList>
            <person name="Bukka A."/>
            <person name="Price C.T."/>
            <person name="Kernodle D.S."/>
            <person name="Graham J.E."/>
        </authorList>
    </citation>
    <scope>INDUCTION</scope>
    <scope>DISRUPTION PHENOTYPE</scope>
    <source>
        <strain>ATCC 25618 / H37Rv</strain>
    </source>
</reference>
<reference key="5">
    <citation type="journal article" date="2017" name="Biochim. Biophys. Acta">
        <title>Characterization of culture filtrate proteins Rv1197 and Rv1198 of ESAT-6 family from Mycobacterium tuberculosis H37Rv.</title>
        <authorList>
            <person name="Pandey H."/>
            <person name="Tripathi S."/>
            <person name="Srivastava K."/>
            <person name="Tripathi D.K."/>
            <person name="Srivastava M."/>
            <person name="Kant S."/>
            <person name="Srivastava K.K."/>
            <person name="Arora A."/>
        </authorList>
    </citation>
    <scope>SUBUNIT</scope>
    <scope>INTERACTION WITH ESXL</scope>
    <source>
        <strain>H37Rv</strain>
    </source>
</reference>
<sequence>MASRFMTDPHAMRDMAGRFEVHAQTVEDEARRMWASAQNISGAGWSGMAEATSLDTMAQMNQAFRNIVNMLHGVRDGLVRDANNYEQQEQASQQILSS</sequence>
<evidence type="ECO:0000269" key="1">
    <source>
    </source>
</evidence>
<evidence type="ECO:0000269" key="2">
    <source>
    </source>
</evidence>
<evidence type="ECO:0000269" key="3">
    <source>
    </source>
</evidence>
<evidence type="ECO:0000303" key="4">
    <source>
    </source>
</evidence>
<evidence type="ECO:0000305" key="5"/>
<evidence type="ECO:0000305" key="6">
    <source>
    </source>
</evidence>
<gene>
    <name evidence="4" type="primary">esxK</name>
    <name type="ordered locus">Rv1197</name>
    <name type="ORF">MTCI364.09</name>
</gene>
<comment type="subunit">
    <text evidence="3">Strongly interacts with EsxL to form a heterodimeric complex under reducing conditions. The complex is regulated by the redox state of EsxL.</text>
</comment>
<comment type="subcellular location">
    <subcellularLocation>
        <location evidence="1">Secreted</location>
    </subcellularLocation>
    <text evidence="6">Probably secreted via the ESX-5 / type VII secretion system (T7SS).</text>
</comment>
<comment type="induction">
    <text evidence="2">Differentially expressed under different growth conditions. Highly expressed in sputum bacteria.</text>
</comment>
<comment type="disruption phenotype">
    <text evidence="2">EsxKL deletion mutant shows reduced intracellular growth in primary human macrophages. Also shows growth defects in the absence of host cells.</text>
</comment>
<comment type="similarity">
    <text evidence="6">Belongs to the WXG100 family. CFP-10 subfamily.</text>
</comment>
<dbReference type="EMBL" id="AL123456">
    <property type="protein sequence ID" value="CCP43953.1"/>
    <property type="molecule type" value="Genomic_DNA"/>
</dbReference>
<dbReference type="PIR" id="C70608">
    <property type="entry name" value="C70608"/>
</dbReference>
<dbReference type="RefSeq" id="NP_215713.1">
    <property type="nucleotide sequence ID" value="NC_000962.3"/>
</dbReference>
<dbReference type="SMR" id="P9WNJ7"/>
<dbReference type="STRING" id="83332.Rv1197"/>
<dbReference type="PaxDb" id="83332-Rv1197"/>
<dbReference type="DNASU" id="886051"/>
<dbReference type="GeneID" id="886051"/>
<dbReference type="KEGG" id="mtu:Rv1197"/>
<dbReference type="KEGG" id="mtv:RVBD_1197"/>
<dbReference type="TubercuList" id="Rv1197"/>
<dbReference type="eggNOG" id="COG4842">
    <property type="taxonomic scope" value="Bacteria"/>
</dbReference>
<dbReference type="InParanoid" id="P9WNJ7"/>
<dbReference type="OrthoDB" id="4739539at2"/>
<dbReference type="PhylomeDB" id="P9WNJ7"/>
<dbReference type="Proteomes" id="UP000001584">
    <property type="component" value="Chromosome"/>
</dbReference>
<dbReference type="GO" id="GO:0005576">
    <property type="term" value="C:extracellular region"/>
    <property type="evidence" value="ECO:0007005"/>
    <property type="project" value="MTBBASE"/>
</dbReference>
<dbReference type="FunFam" id="1.10.287.1060:FF:000006">
    <property type="entry name" value="ESAT-6-like protein"/>
    <property type="match status" value="1"/>
</dbReference>
<dbReference type="Gene3D" id="1.10.287.1060">
    <property type="entry name" value="ESAT-6-like"/>
    <property type="match status" value="1"/>
</dbReference>
<dbReference type="InterPro" id="IPR036689">
    <property type="entry name" value="ESAT-6-like_sf"/>
</dbReference>
<dbReference type="InterPro" id="IPR010310">
    <property type="entry name" value="T7SS_ESAT-6-like"/>
</dbReference>
<dbReference type="NCBIfam" id="TIGR03930">
    <property type="entry name" value="WXG100_ESAT6"/>
    <property type="match status" value="1"/>
</dbReference>
<dbReference type="Pfam" id="PF06013">
    <property type="entry name" value="WXG100"/>
    <property type="match status" value="1"/>
</dbReference>
<dbReference type="SUPFAM" id="SSF140453">
    <property type="entry name" value="EsxAB dimer-like"/>
    <property type="match status" value="1"/>
</dbReference>
<name>ESXK_MYCTU</name>
<organism>
    <name type="scientific">Mycobacterium tuberculosis (strain ATCC 25618 / H37Rv)</name>
    <dbReference type="NCBI Taxonomy" id="83332"/>
    <lineage>
        <taxon>Bacteria</taxon>
        <taxon>Bacillati</taxon>
        <taxon>Actinomycetota</taxon>
        <taxon>Actinomycetes</taxon>
        <taxon>Mycobacteriales</taxon>
        <taxon>Mycobacteriaceae</taxon>
        <taxon>Mycobacterium</taxon>
        <taxon>Mycobacterium tuberculosis complex</taxon>
    </lineage>
</organism>